<proteinExistence type="inferred from homology"/>
<evidence type="ECO:0000255" key="1">
    <source>
        <dbReference type="HAMAP-Rule" id="MF_01408"/>
    </source>
</evidence>
<evidence type="ECO:0000255" key="2">
    <source>
        <dbReference type="PROSITE-ProRule" id="PRU00661"/>
    </source>
</evidence>
<accession>Q9CBW3</accession>
<name>THYX_MYCLE</name>
<comment type="function">
    <text evidence="1">Catalyzes the reductive methylation of 2'-deoxyuridine-5'-monophosphate (dUMP) to 2'-deoxythymidine-5'-monophosphate (dTMP) while utilizing 5,10-methylenetetrahydrofolate (mTHF) as the methyl donor, and NADPH and FADH(2) as the reductant.</text>
</comment>
<comment type="catalytic activity">
    <reaction evidence="1">
        <text>dUMP + (6R)-5,10-methylene-5,6,7,8-tetrahydrofolate + NADPH + H(+) = dTMP + (6S)-5,6,7,8-tetrahydrofolate + NADP(+)</text>
        <dbReference type="Rhea" id="RHEA:29043"/>
        <dbReference type="ChEBI" id="CHEBI:15378"/>
        <dbReference type="ChEBI" id="CHEBI:15636"/>
        <dbReference type="ChEBI" id="CHEBI:57453"/>
        <dbReference type="ChEBI" id="CHEBI:57783"/>
        <dbReference type="ChEBI" id="CHEBI:58349"/>
        <dbReference type="ChEBI" id="CHEBI:63528"/>
        <dbReference type="ChEBI" id="CHEBI:246422"/>
        <dbReference type="EC" id="2.1.1.148"/>
    </reaction>
</comment>
<comment type="cofactor">
    <cofactor evidence="1">
        <name>FAD</name>
        <dbReference type="ChEBI" id="CHEBI:57692"/>
    </cofactor>
    <text evidence="1">Binds 4 FAD per tetramer. Each FAD binding site is formed by three monomers.</text>
</comment>
<comment type="pathway">
    <text evidence="1">Pyrimidine metabolism; dTTP biosynthesis.</text>
</comment>
<comment type="subunit">
    <text evidence="1">Homotetramer.</text>
</comment>
<comment type="similarity">
    <text evidence="1">Belongs to the thymidylate synthase ThyX family.</text>
</comment>
<organism>
    <name type="scientific">Mycobacterium leprae (strain TN)</name>
    <dbReference type="NCBI Taxonomy" id="272631"/>
    <lineage>
        <taxon>Bacteria</taxon>
        <taxon>Bacillati</taxon>
        <taxon>Actinomycetota</taxon>
        <taxon>Actinomycetes</taxon>
        <taxon>Mycobacteriales</taxon>
        <taxon>Mycobacteriaceae</taxon>
        <taxon>Mycobacterium</taxon>
    </lineage>
</organism>
<reference key="1">
    <citation type="journal article" date="2001" name="Nature">
        <title>Massive gene decay in the leprosy bacillus.</title>
        <authorList>
            <person name="Cole S.T."/>
            <person name="Eiglmeier K."/>
            <person name="Parkhill J."/>
            <person name="James K.D."/>
            <person name="Thomson N.R."/>
            <person name="Wheeler P.R."/>
            <person name="Honore N."/>
            <person name="Garnier T."/>
            <person name="Churcher C.M."/>
            <person name="Harris D.E."/>
            <person name="Mungall K.L."/>
            <person name="Basham D."/>
            <person name="Brown D."/>
            <person name="Chillingworth T."/>
            <person name="Connor R."/>
            <person name="Davies R.M."/>
            <person name="Devlin K."/>
            <person name="Duthoy S."/>
            <person name="Feltwell T."/>
            <person name="Fraser A."/>
            <person name="Hamlin N."/>
            <person name="Holroyd S."/>
            <person name="Hornsby T."/>
            <person name="Jagels K."/>
            <person name="Lacroix C."/>
            <person name="Maclean J."/>
            <person name="Moule S."/>
            <person name="Murphy L.D."/>
            <person name="Oliver K."/>
            <person name="Quail M.A."/>
            <person name="Rajandream M.A."/>
            <person name="Rutherford K.M."/>
            <person name="Rutter S."/>
            <person name="Seeger K."/>
            <person name="Simon S."/>
            <person name="Simmonds M."/>
            <person name="Skelton J."/>
            <person name="Squares R."/>
            <person name="Squares S."/>
            <person name="Stevens K."/>
            <person name="Taylor K."/>
            <person name="Whitehead S."/>
            <person name="Woodward J.R."/>
            <person name="Barrell B.G."/>
        </authorList>
    </citation>
    <scope>NUCLEOTIDE SEQUENCE [LARGE SCALE GENOMIC DNA]</scope>
    <source>
        <strain>TN</strain>
    </source>
</reference>
<feature type="chain" id="PRO_0000175568" description="Flavin-dependent thymidylate synthase">
    <location>
        <begin position="1"/>
        <end position="254"/>
    </location>
</feature>
<feature type="domain" description="ThyX" evidence="2">
    <location>
        <begin position="7"/>
        <end position="237"/>
    </location>
</feature>
<feature type="short sequence motif" description="ThyX motif" evidence="1">
    <location>
        <begin position="95"/>
        <end position="105"/>
    </location>
</feature>
<feature type="active site" description="Involved in ionization of N3 of dUMP, leading to its activation" evidence="1">
    <location>
        <position position="203"/>
    </location>
</feature>
<feature type="binding site" evidence="1">
    <location>
        <begin position="92"/>
        <end position="95"/>
    </location>
    <ligand>
        <name>dUMP</name>
        <dbReference type="ChEBI" id="CHEBI:246422"/>
        <note>ligand shared between dimeric partners</note>
    </ligand>
</feature>
<feature type="binding site" evidence="1">
    <location>
        <begin position="95"/>
        <end position="97"/>
    </location>
    <ligand>
        <name>FAD</name>
        <dbReference type="ChEBI" id="CHEBI:57692"/>
        <note>ligand shared between neighboring subunits</note>
    </ligand>
</feature>
<feature type="binding site" description="in other chain" evidence="1">
    <location>
        <begin position="103"/>
        <end position="107"/>
    </location>
    <ligand>
        <name>dUMP</name>
        <dbReference type="ChEBI" id="CHEBI:246422"/>
        <note>ligand shared between dimeric partners</note>
    </ligand>
</feature>
<feature type="binding site" evidence="1">
    <location>
        <position position="103"/>
    </location>
    <ligand>
        <name>FAD</name>
        <dbReference type="ChEBI" id="CHEBI:57692"/>
        <note>ligand shared between neighboring subunits</note>
    </ligand>
</feature>
<feature type="binding site" description="in other chain" evidence="1">
    <location>
        <position position="176"/>
    </location>
    <ligand>
        <name>dUMP</name>
        <dbReference type="ChEBI" id="CHEBI:246422"/>
        <note>ligand shared between dimeric partners</note>
    </ligand>
</feature>
<feature type="binding site" evidence="1">
    <location>
        <begin position="192"/>
        <end position="194"/>
    </location>
    <ligand>
        <name>FAD</name>
        <dbReference type="ChEBI" id="CHEBI:57692"/>
        <note>ligand shared between neighboring subunits</note>
    </ligand>
</feature>
<feature type="binding site" evidence="1">
    <location>
        <position position="198"/>
    </location>
    <ligand>
        <name>FAD</name>
        <dbReference type="ChEBI" id="CHEBI:57692"/>
        <note>ligand shared between neighboring subunits</note>
    </ligand>
</feature>
<feature type="binding site" evidence="1">
    <location>
        <position position="203"/>
    </location>
    <ligand>
        <name>dUMP</name>
        <dbReference type="ChEBI" id="CHEBI:246422"/>
        <note>ligand shared between dimeric partners</note>
    </ligand>
</feature>
<keyword id="KW-0274">FAD</keyword>
<keyword id="KW-0285">Flavoprotein</keyword>
<keyword id="KW-0489">Methyltransferase</keyword>
<keyword id="KW-0521">NADP</keyword>
<keyword id="KW-0545">Nucleotide biosynthesis</keyword>
<keyword id="KW-1185">Reference proteome</keyword>
<keyword id="KW-0808">Transferase</keyword>
<protein>
    <recommendedName>
        <fullName evidence="1">Flavin-dependent thymidylate synthase</fullName>
        <shortName evidence="1">FDTS</shortName>
        <ecNumber evidence="1">2.1.1.148</ecNumber>
    </recommendedName>
    <alternativeName>
        <fullName evidence="1">FAD-dependent thymidylate synthase</fullName>
    </alternativeName>
    <alternativeName>
        <fullName evidence="1">Thymidylate synthase ThyX</fullName>
        <shortName evidence="1">TS</shortName>
        <shortName evidence="1">TSase</shortName>
    </alternativeName>
</protein>
<sequence length="254" mass="27967">MAQIAPLRVQLIAKTEFLAPPDVSWTTDADGGSALVEFAGRACYQSWSKPNPRTATNAAYIKHIIDVGHVAVLEHASVSFYISGISRSCTHELIRHRHFSYSQLSQRYVPEKDAQVVVPPDMEDDDELQQILIAAVEASRATYTELLVKLNAKLMAGELGGNRAVLRRKQARQAAHAVLPNANETRIVVTGNYRAWRHFIAMRASEHADVEIRRLAIVCLRRLVDVAPAVFADFEITALADGTEVATSPLATEA</sequence>
<dbReference type="EC" id="2.1.1.148" evidence="1"/>
<dbReference type="EMBL" id="AL583922">
    <property type="protein sequence ID" value="CAC30465.1"/>
    <property type="molecule type" value="Genomic_DNA"/>
</dbReference>
<dbReference type="PIR" id="D87098">
    <property type="entry name" value="D87098"/>
</dbReference>
<dbReference type="RefSeq" id="NP_302061.1">
    <property type="nucleotide sequence ID" value="NC_002677.1"/>
</dbReference>
<dbReference type="RefSeq" id="WP_010908382.1">
    <property type="nucleotide sequence ID" value="NC_002677.1"/>
</dbReference>
<dbReference type="SMR" id="Q9CBW3"/>
<dbReference type="STRING" id="272631.gene:17575355"/>
<dbReference type="KEGG" id="mle:ML1514"/>
<dbReference type="PATRIC" id="fig|272631.5.peg.2843"/>
<dbReference type="Leproma" id="ML1514"/>
<dbReference type="eggNOG" id="COG1351">
    <property type="taxonomic scope" value="Bacteria"/>
</dbReference>
<dbReference type="HOGENOM" id="CLU_077585_1_0_11"/>
<dbReference type="OrthoDB" id="9780625at2"/>
<dbReference type="UniPathway" id="UPA00575"/>
<dbReference type="Proteomes" id="UP000000806">
    <property type="component" value="Chromosome"/>
</dbReference>
<dbReference type="GO" id="GO:0050660">
    <property type="term" value="F:flavin adenine dinucleotide binding"/>
    <property type="evidence" value="ECO:0007669"/>
    <property type="project" value="InterPro"/>
</dbReference>
<dbReference type="GO" id="GO:0070402">
    <property type="term" value="F:NADPH binding"/>
    <property type="evidence" value="ECO:0007669"/>
    <property type="project" value="TreeGrafter"/>
</dbReference>
<dbReference type="GO" id="GO:0050797">
    <property type="term" value="F:thymidylate synthase (FAD) activity"/>
    <property type="evidence" value="ECO:0007669"/>
    <property type="project" value="UniProtKB-UniRule"/>
</dbReference>
<dbReference type="GO" id="GO:0004799">
    <property type="term" value="F:thymidylate synthase activity"/>
    <property type="evidence" value="ECO:0007669"/>
    <property type="project" value="TreeGrafter"/>
</dbReference>
<dbReference type="GO" id="GO:0006231">
    <property type="term" value="P:dTMP biosynthetic process"/>
    <property type="evidence" value="ECO:0007669"/>
    <property type="project" value="UniProtKB-UniRule"/>
</dbReference>
<dbReference type="GO" id="GO:0006235">
    <property type="term" value="P:dTTP biosynthetic process"/>
    <property type="evidence" value="ECO:0007669"/>
    <property type="project" value="UniProtKB-UniRule"/>
</dbReference>
<dbReference type="GO" id="GO:0032259">
    <property type="term" value="P:methylation"/>
    <property type="evidence" value="ECO:0007669"/>
    <property type="project" value="UniProtKB-KW"/>
</dbReference>
<dbReference type="CDD" id="cd20175">
    <property type="entry name" value="ThyX"/>
    <property type="match status" value="1"/>
</dbReference>
<dbReference type="Gene3D" id="3.30.70.3180">
    <property type="match status" value="2"/>
</dbReference>
<dbReference type="Gene3D" id="6.10.140.450">
    <property type="match status" value="1"/>
</dbReference>
<dbReference type="HAMAP" id="MF_01408">
    <property type="entry name" value="ThyX"/>
    <property type="match status" value="1"/>
</dbReference>
<dbReference type="InterPro" id="IPR003669">
    <property type="entry name" value="Thymidylate_synthase_ThyX"/>
</dbReference>
<dbReference type="InterPro" id="IPR036098">
    <property type="entry name" value="Thymidylate_synthase_ThyX_sf"/>
</dbReference>
<dbReference type="NCBIfam" id="TIGR02170">
    <property type="entry name" value="thyX"/>
    <property type="match status" value="1"/>
</dbReference>
<dbReference type="PANTHER" id="PTHR34934">
    <property type="entry name" value="FLAVIN-DEPENDENT THYMIDYLATE SYNTHASE"/>
    <property type="match status" value="1"/>
</dbReference>
<dbReference type="PANTHER" id="PTHR34934:SF1">
    <property type="entry name" value="FLAVIN-DEPENDENT THYMIDYLATE SYNTHASE"/>
    <property type="match status" value="1"/>
</dbReference>
<dbReference type="Pfam" id="PF02511">
    <property type="entry name" value="Thy1"/>
    <property type="match status" value="1"/>
</dbReference>
<dbReference type="SUPFAM" id="SSF69796">
    <property type="entry name" value="Thymidylate synthase-complementing protein Thy1"/>
    <property type="match status" value="1"/>
</dbReference>
<dbReference type="PROSITE" id="PS51331">
    <property type="entry name" value="THYX"/>
    <property type="match status" value="1"/>
</dbReference>
<gene>
    <name evidence="1" type="primary">thyX</name>
    <name type="ordered locus">ML1514</name>
</gene>